<feature type="chain" id="PRO_1000215712" description="NADPH dehydrogenase">
    <location>
        <begin position="1"/>
        <end position="338"/>
    </location>
</feature>
<feature type="binding site" evidence="1">
    <location>
        <begin position="22"/>
        <end position="25"/>
    </location>
    <ligand>
        <name>FMN</name>
        <dbReference type="ChEBI" id="CHEBI:58210"/>
    </ligand>
</feature>
<feature type="binding site" evidence="1">
    <location>
        <position position="27"/>
    </location>
    <ligand>
        <name>substrate</name>
    </ligand>
</feature>
<feature type="binding site" evidence="1">
    <location>
        <position position="59"/>
    </location>
    <ligand>
        <name>FMN</name>
        <dbReference type="ChEBI" id="CHEBI:58210"/>
    </ligand>
</feature>
<feature type="binding site" evidence="1">
    <location>
        <position position="101"/>
    </location>
    <ligand>
        <name>FMN</name>
        <dbReference type="ChEBI" id="CHEBI:58210"/>
    </ligand>
</feature>
<feature type="binding site" evidence="1">
    <location>
        <begin position="163"/>
        <end position="166"/>
    </location>
    <ligand>
        <name>substrate</name>
    </ligand>
</feature>
<feature type="binding site" evidence="1">
    <location>
        <position position="214"/>
    </location>
    <ligand>
        <name>FMN</name>
        <dbReference type="ChEBI" id="CHEBI:58210"/>
    </ligand>
</feature>
<feature type="binding site" evidence="1">
    <location>
        <begin position="306"/>
        <end position="307"/>
    </location>
    <ligand>
        <name>FMN</name>
        <dbReference type="ChEBI" id="CHEBI:58210"/>
    </ligand>
</feature>
<accession>C1KYN8</accession>
<name>NAMA_LISMC</name>
<organism>
    <name type="scientific">Listeria monocytogenes serotype 4b (strain CLIP80459)</name>
    <dbReference type="NCBI Taxonomy" id="568819"/>
    <lineage>
        <taxon>Bacteria</taxon>
        <taxon>Bacillati</taxon>
        <taxon>Bacillota</taxon>
        <taxon>Bacilli</taxon>
        <taxon>Bacillales</taxon>
        <taxon>Listeriaceae</taxon>
        <taxon>Listeria</taxon>
    </lineage>
</organism>
<dbReference type="EC" id="1.6.99.1" evidence="1"/>
<dbReference type="EMBL" id="FM242711">
    <property type="protein sequence ID" value="CAS06195.1"/>
    <property type="molecule type" value="Genomic_DNA"/>
</dbReference>
<dbReference type="RefSeq" id="WP_003725406.1">
    <property type="nucleotide sequence ID" value="NC_012488.1"/>
</dbReference>
<dbReference type="SMR" id="C1KYN8"/>
<dbReference type="KEGG" id="lmc:Lm4b_02440"/>
<dbReference type="HOGENOM" id="CLU_012153_2_1_9"/>
<dbReference type="GO" id="GO:0010181">
    <property type="term" value="F:FMN binding"/>
    <property type="evidence" value="ECO:0007669"/>
    <property type="project" value="UniProtKB-UniRule"/>
</dbReference>
<dbReference type="GO" id="GO:0050661">
    <property type="term" value="F:NADP binding"/>
    <property type="evidence" value="ECO:0007669"/>
    <property type="project" value="UniProtKB-UniRule"/>
</dbReference>
<dbReference type="GO" id="GO:0003959">
    <property type="term" value="F:NADPH dehydrogenase activity"/>
    <property type="evidence" value="ECO:0007669"/>
    <property type="project" value="UniProtKB-UniRule"/>
</dbReference>
<dbReference type="GO" id="GO:0009636">
    <property type="term" value="P:response to toxic substance"/>
    <property type="evidence" value="ECO:0007669"/>
    <property type="project" value="UniProtKB-KW"/>
</dbReference>
<dbReference type="CDD" id="cd02932">
    <property type="entry name" value="OYE_YqiM_FMN"/>
    <property type="match status" value="1"/>
</dbReference>
<dbReference type="FunFam" id="3.20.20.70:FF:000299">
    <property type="entry name" value="NADPH dehydrogenase"/>
    <property type="match status" value="1"/>
</dbReference>
<dbReference type="Gene3D" id="3.20.20.70">
    <property type="entry name" value="Aldolase class I"/>
    <property type="match status" value="1"/>
</dbReference>
<dbReference type="HAMAP" id="MF_01614">
    <property type="entry name" value="NamA"/>
    <property type="match status" value="1"/>
</dbReference>
<dbReference type="InterPro" id="IPR013785">
    <property type="entry name" value="Aldolase_TIM"/>
</dbReference>
<dbReference type="InterPro" id="IPR023663">
    <property type="entry name" value="NADPH_DH_bac"/>
</dbReference>
<dbReference type="InterPro" id="IPR001155">
    <property type="entry name" value="OxRdtase_FMN_N"/>
</dbReference>
<dbReference type="InterPro" id="IPR044152">
    <property type="entry name" value="YqjM-like"/>
</dbReference>
<dbReference type="NCBIfam" id="NF010047">
    <property type="entry name" value="PRK13523.1"/>
    <property type="match status" value="1"/>
</dbReference>
<dbReference type="PANTHER" id="PTHR43303">
    <property type="entry name" value="NADPH DEHYDROGENASE C23G7.10C-RELATED"/>
    <property type="match status" value="1"/>
</dbReference>
<dbReference type="PANTHER" id="PTHR43303:SF4">
    <property type="entry name" value="NADPH DEHYDROGENASE C23G7.10C-RELATED"/>
    <property type="match status" value="1"/>
</dbReference>
<dbReference type="Pfam" id="PF00724">
    <property type="entry name" value="Oxidored_FMN"/>
    <property type="match status" value="1"/>
</dbReference>
<dbReference type="SUPFAM" id="SSF51395">
    <property type="entry name" value="FMN-linked oxidoreductases"/>
    <property type="match status" value="1"/>
</dbReference>
<protein>
    <recommendedName>
        <fullName evidence="1">NADPH dehydrogenase</fullName>
        <ecNumber evidence="1">1.6.99.1</ecNumber>
    </recommendedName>
</protein>
<sequence>MSKLFSEYKLKDVTLKNRIVMSPMCMYSVENKDGIATDFHFAHYVSRAAGGTGLVILEATAVQEVGRISEFDLGLWNDEQVPALKKLVDGLHYHGAKAGIQLAHAGRKAVLPGEIVAPSAIAFDEKSDKPVELTKEAIKEVVADFKRAAYRAKEAGFDVIEIHAAHGYLIHQFLSPITNRREDNYGGPAGNRYKILSDIIKAVKEVWDGPIIVRVSATDYAHGGLQLEDHIPFAKWMKADGVELIDVSTGGLVNVAPPVFPGYQVPFADEIRRGAGIATGALGLITRGEQAEEILCNERADLIIVGRELLRNPYFAKDAAKQLGETIEGPKQYSRAWK</sequence>
<proteinExistence type="inferred from homology"/>
<evidence type="ECO:0000255" key="1">
    <source>
        <dbReference type="HAMAP-Rule" id="MF_01614"/>
    </source>
</evidence>
<comment type="function">
    <text evidence="1">Catalyzes the reduction of the double bond of an array of alpha,beta-unsaturated aldehydes and ketones. It also reduces the nitro group of nitroester and nitroaromatic compounds. It could have a role in detoxification processes.</text>
</comment>
<comment type="catalytic activity">
    <reaction evidence="1">
        <text>A + NADPH + H(+) = AH2 + NADP(+)</text>
        <dbReference type="Rhea" id="RHEA:13149"/>
        <dbReference type="ChEBI" id="CHEBI:13193"/>
        <dbReference type="ChEBI" id="CHEBI:15378"/>
        <dbReference type="ChEBI" id="CHEBI:17499"/>
        <dbReference type="ChEBI" id="CHEBI:57783"/>
        <dbReference type="ChEBI" id="CHEBI:58349"/>
        <dbReference type="EC" id="1.6.99.1"/>
    </reaction>
</comment>
<comment type="cofactor">
    <cofactor evidence="1">
        <name>FMN</name>
        <dbReference type="ChEBI" id="CHEBI:58210"/>
    </cofactor>
</comment>
<comment type="subunit">
    <text evidence="1">Homotetramer.</text>
</comment>
<comment type="similarity">
    <text evidence="1">Belongs to the NADH:flavin oxidoreductase/NADH oxidase family. NamA subfamily.</text>
</comment>
<gene>
    <name evidence="1" type="primary">namA</name>
    <name type="ordered locus">Lm4b_02440</name>
</gene>
<reference key="1">
    <citation type="journal article" date="2012" name="BMC Genomics">
        <title>Comparative genomics and transcriptomics of lineages I, II, and III strains of Listeria monocytogenes.</title>
        <authorList>
            <person name="Hain T."/>
            <person name="Ghai R."/>
            <person name="Billion A."/>
            <person name="Kuenne C.T."/>
            <person name="Steinweg C."/>
            <person name="Izar B."/>
            <person name="Mohamed W."/>
            <person name="Mraheil M."/>
            <person name="Domann E."/>
            <person name="Schaffrath S."/>
            <person name="Karst U."/>
            <person name="Goesmann A."/>
            <person name="Oehm S."/>
            <person name="Puhler A."/>
            <person name="Merkl R."/>
            <person name="Vorwerk S."/>
            <person name="Glaser P."/>
            <person name="Garrido P."/>
            <person name="Rusniok C."/>
            <person name="Buchrieser C."/>
            <person name="Goebel W."/>
            <person name="Chakraborty T."/>
        </authorList>
    </citation>
    <scope>NUCLEOTIDE SEQUENCE [LARGE SCALE GENOMIC DNA]</scope>
    <source>
        <strain>CLIP80459</strain>
    </source>
</reference>
<keyword id="KW-0216">Detoxification</keyword>
<keyword id="KW-0285">Flavoprotein</keyword>
<keyword id="KW-0288">FMN</keyword>
<keyword id="KW-0521">NADP</keyword>
<keyword id="KW-0560">Oxidoreductase</keyword>